<comment type="subcellular location">
    <subcellularLocation>
        <location evidence="2">Plastid</location>
        <location evidence="2">Chloroplast</location>
    </subcellularLocation>
</comment>
<comment type="similarity">
    <text evidence="2">Belongs to the PPR family. P subfamily.</text>
</comment>
<comment type="sequence caution" evidence="2">
    <conflict type="erroneous initiation">
        <sequence resource="EMBL-CDS" id="AAC17075"/>
    </conflict>
</comment>
<comment type="online information" name="Pentatricopeptide repeat proteins">
    <link uri="https://ppr.plantenergy.uwa.edu.au"/>
</comment>
<reference key="1">
    <citation type="journal article" date="2000" name="Nature">
        <title>Sequence and analysis of chromosome 1 of the plant Arabidopsis thaliana.</title>
        <authorList>
            <person name="Theologis A."/>
            <person name="Ecker J.R."/>
            <person name="Palm C.J."/>
            <person name="Federspiel N.A."/>
            <person name="Kaul S."/>
            <person name="White O."/>
            <person name="Alonso J."/>
            <person name="Altafi H."/>
            <person name="Araujo R."/>
            <person name="Bowman C.L."/>
            <person name="Brooks S.Y."/>
            <person name="Buehler E."/>
            <person name="Chan A."/>
            <person name="Chao Q."/>
            <person name="Chen H."/>
            <person name="Cheuk R.F."/>
            <person name="Chin C.W."/>
            <person name="Chung M.K."/>
            <person name="Conn L."/>
            <person name="Conway A.B."/>
            <person name="Conway A.R."/>
            <person name="Creasy T.H."/>
            <person name="Dewar K."/>
            <person name="Dunn P."/>
            <person name="Etgu P."/>
            <person name="Feldblyum T.V."/>
            <person name="Feng J.-D."/>
            <person name="Fong B."/>
            <person name="Fujii C.Y."/>
            <person name="Gill J.E."/>
            <person name="Goldsmith A.D."/>
            <person name="Haas B."/>
            <person name="Hansen N.F."/>
            <person name="Hughes B."/>
            <person name="Huizar L."/>
            <person name="Hunter J.L."/>
            <person name="Jenkins J."/>
            <person name="Johnson-Hopson C."/>
            <person name="Khan S."/>
            <person name="Khaykin E."/>
            <person name="Kim C.J."/>
            <person name="Koo H.L."/>
            <person name="Kremenetskaia I."/>
            <person name="Kurtz D.B."/>
            <person name="Kwan A."/>
            <person name="Lam B."/>
            <person name="Langin-Hooper S."/>
            <person name="Lee A."/>
            <person name="Lee J.M."/>
            <person name="Lenz C.A."/>
            <person name="Li J.H."/>
            <person name="Li Y.-P."/>
            <person name="Lin X."/>
            <person name="Liu S.X."/>
            <person name="Liu Z.A."/>
            <person name="Luros J.S."/>
            <person name="Maiti R."/>
            <person name="Marziali A."/>
            <person name="Militscher J."/>
            <person name="Miranda M."/>
            <person name="Nguyen M."/>
            <person name="Nierman W.C."/>
            <person name="Osborne B.I."/>
            <person name="Pai G."/>
            <person name="Peterson J."/>
            <person name="Pham P.K."/>
            <person name="Rizzo M."/>
            <person name="Rooney T."/>
            <person name="Rowley D."/>
            <person name="Sakano H."/>
            <person name="Salzberg S.L."/>
            <person name="Schwartz J.R."/>
            <person name="Shinn P."/>
            <person name="Southwick A.M."/>
            <person name="Sun H."/>
            <person name="Tallon L.J."/>
            <person name="Tambunga G."/>
            <person name="Toriumi M.J."/>
            <person name="Town C.D."/>
            <person name="Utterback T."/>
            <person name="Van Aken S."/>
            <person name="Vaysberg M."/>
            <person name="Vysotskaia V.S."/>
            <person name="Walker M."/>
            <person name="Wu D."/>
            <person name="Yu G."/>
            <person name="Fraser C.M."/>
            <person name="Venter J.C."/>
            <person name="Davis R.W."/>
        </authorList>
    </citation>
    <scope>NUCLEOTIDE SEQUENCE [LARGE SCALE GENOMIC DNA]</scope>
    <source>
        <strain>cv. Columbia</strain>
    </source>
</reference>
<reference key="2">
    <citation type="journal article" date="2017" name="Plant J.">
        <title>Araport11: a complete reannotation of the Arabidopsis thaliana reference genome.</title>
        <authorList>
            <person name="Cheng C.Y."/>
            <person name="Krishnakumar V."/>
            <person name="Chan A.P."/>
            <person name="Thibaud-Nissen F."/>
            <person name="Schobel S."/>
            <person name="Town C.D."/>
        </authorList>
    </citation>
    <scope>GENOME REANNOTATION</scope>
    <source>
        <strain>cv. Columbia</strain>
    </source>
</reference>
<reference key="3">
    <citation type="submission" date="2007-02" db="EMBL/GenBank/DDBJ databases">
        <title>Arabidopsis ORF clones.</title>
        <authorList>
            <person name="Bautista V.R."/>
            <person name="Kim C.J."/>
            <person name="Chen H."/>
            <person name="Wu S.Y."/>
            <person name="De Los Reyes C."/>
            <person name="Ecker J.R."/>
        </authorList>
    </citation>
    <scope>NUCLEOTIDE SEQUENCE [LARGE SCALE MRNA]</scope>
    <source>
        <strain>cv. Columbia</strain>
    </source>
</reference>
<reference key="4">
    <citation type="journal article" date="2004" name="Plant Cell">
        <title>Genome-wide analysis of Arabidopsis pentatricopeptide repeat proteins reveals their essential role in organelle biogenesis.</title>
        <authorList>
            <person name="Lurin C."/>
            <person name="Andres C."/>
            <person name="Aubourg S."/>
            <person name="Bellaoui M."/>
            <person name="Bitton F."/>
            <person name="Bruyere C."/>
            <person name="Caboche M."/>
            <person name="Debast C."/>
            <person name="Gualberto J."/>
            <person name="Hoffmann B."/>
            <person name="Lecharny A."/>
            <person name="Le Ret M."/>
            <person name="Martin-Magniette M.-L."/>
            <person name="Mireau H."/>
            <person name="Peeters N."/>
            <person name="Renou J.-P."/>
            <person name="Szurek B."/>
            <person name="Taconnat L."/>
            <person name="Small I."/>
        </authorList>
    </citation>
    <scope>GENE FAMILY</scope>
</reference>
<feature type="transit peptide" description="Chloroplast" evidence="1">
    <location>
        <begin position="1"/>
        <end position="37"/>
    </location>
</feature>
<feature type="chain" id="PRO_0000342872" description="Pentatricopeptide repeat-containing protein At1g79080, chloroplastic">
    <location>
        <begin position="38"/>
        <end position="576"/>
    </location>
</feature>
<feature type="repeat" description="PPR 1">
    <location>
        <begin position="105"/>
        <end position="139"/>
    </location>
</feature>
<feature type="repeat" description="PPR 2">
    <location>
        <begin position="140"/>
        <end position="174"/>
    </location>
</feature>
<feature type="repeat" description="PPR 3">
    <location>
        <begin position="175"/>
        <end position="209"/>
    </location>
</feature>
<feature type="repeat" description="PPR 4">
    <location>
        <begin position="210"/>
        <end position="244"/>
    </location>
</feature>
<feature type="repeat" description="PPR 5">
    <location>
        <begin position="245"/>
        <end position="279"/>
    </location>
</feature>
<feature type="repeat" description="PPR 6">
    <location>
        <begin position="280"/>
        <end position="314"/>
    </location>
</feature>
<feature type="repeat" description="PPR 7">
    <location>
        <begin position="315"/>
        <end position="349"/>
    </location>
</feature>
<feature type="repeat" description="PPR 8">
    <location>
        <begin position="352"/>
        <end position="386"/>
    </location>
</feature>
<feature type="repeat" description="PPR 9">
    <location>
        <begin position="387"/>
        <end position="417"/>
    </location>
</feature>
<feature type="repeat" description="PPR 10">
    <location>
        <begin position="422"/>
        <end position="456"/>
    </location>
</feature>
<feature type="repeat" description="PPR 11">
    <location>
        <begin position="457"/>
        <end position="487"/>
    </location>
</feature>
<feature type="repeat" description="PPR 12">
    <location>
        <begin position="493"/>
        <end position="527"/>
    </location>
</feature>
<feature type="repeat" description="PPR 13">
    <location>
        <begin position="528"/>
        <end position="562"/>
    </location>
</feature>
<name>PP131_ARATH</name>
<dbReference type="EMBL" id="AC002986">
    <property type="protein sequence ID" value="AAC17075.1"/>
    <property type="status" value="ALT_INIT"/>
    <property type="molecule type" value="Genomic_DNA"/>
</dbReference>
<dbReference type="EMBL" id="CP002684">
    <property type="protein sequence ID" value="AEE36201.1"/>
    <property type="molecule type" value="Genomic_DNA"/>
</dbReference>
<dbReference type="EMBL" id="BT030325">
    <property type="protein sequence ID" value="ABO09888.1"/>
    <property type="molecule type" value="mRNA"/>
</dbReference>
<dbReference type="PIR" id="T01047">
    <property type="entry name" value="T01047"/>
</dbReference>
<dbReference type="RefSeq" id="NP_178029.2">
    <property type="nucleotide sequence ID" value="NM_106559.3"/>
</dbReference>
<dbReference type="SMR" id="A3KPF8"/>
<dbReference type="FunCoup" id="A3KPF8">
    <property type="interactions" value="835"/>
</dbReference>
<dbReference type="STRING" id="3702.A3KPF8"/>
<dbReference type="iPTMnet" id="A3KPF8"/>
<dbReference type="PaxDb" id="3702-AT1G79080.1"/>
<dbReference type="ProteomicsDB" id="249067"/>
<dbReference type="EnsemblPlants" id="AT1G79080.1">
    <property type="protein sequence ID" value="AT1G79080.1"/>
    <property type="gene ID" value="AT1G79080"/>
</dbReference>
<dbReference type="GeneID" id="844249"/>
<dbReference type="Gramene" id="AT1G79080.1">
    <property type="protein sequence ID" value="AT1G79080.1"/>
    <property type="gene ID" value="AT1G79080"/>
</dbReference>
<dbReference type="KEGG" id="ath:AT1G79080"/>
<dbReference type="Araport" id="AT1G79080"/>
<dbReference type="TAIR" id="AT1G79080"/>
<dbReference type="eggNOG" id="KOG4197">
    <property type="taxonomic scope" value="Eukaryota"/>
</dbReference>
<dbReference type="HOGENOM" id="CLU_002706_49_0_1"/>
<dbReference type="InParanoid" id="A3KPF8"/>
<dbReference type="OMA" id="CKPTVDN"/>
<dbReference type="PhylomeDB" id="A3KPF8"/>
<dbReference type="PRO" id="PR:A3KPF8"/>
<dbReference type="Proteomes" id="UP000006548">
    <property type="component" value="Chromosome 1"/>
</dbReference>
<dbReference type="ExpressionAtlas" id="A3KPF8">
    <property type="expression patterns" value="baseline and differential"/>
</dbReference>
<dbReference type="GO" id="GO:0009507">
    <property type="term" value="C:chloroplast"/>
    <property type="evidence" value="ECO:0007669"/>
    <property type="project" value="UniProtKB-SubCell"/>
</dbReference>
<dbReference type="GO" id="GO:0003729">
    <property type="term" value="F:mRNA binding"/>
    <property type="evidence" value="ECO:0000314"/>
    <property type="project" value="TAIR"/>
</dbReference>
<dbReference type="Gene3D" id="1.25.40.10">
    <property type="entry name" value="Tetratricopeptide repeat domain"/>
    <property type="match status" value="6"/>
</dbReference>
<dbReference type="InterPro" id="IPR002885">
    <property type="entry name" value="Pentatricopeptide_rpt"/>
</dbReference>
<dbReference type="InterPro" id="IPR050667">
    <property type="entry name" value="PPR-containing_protein"/>
</dbReference>
<dbReference type="InterPro" id="IPR011990">
    <property type="entry name" value="TPR-like_helical_dom_sf"/>
</dbReference>
<dbReference type="NCBIfam" id="TIGR00756">
    <property type="entry name" value="PPR"/>
    <property type="match status" value="10"/>
</dbReference>
<dbReference type="PANTHER" id="PTHR47939">
    <property type="entry name" value="MEMBRANE-ASSOCIATED SALT-INDUCIBLE PROTEIN-LIKE"/>
    <property type="match status" value="1"/>
</dbReference>
<dbReference type="PANTHER" id="PTHR47939:SF1">
    <property type="entry name" value="OS04G0684500 PROTEIN"/>
    <property type="match status" value="1"/>
</dbReference>
<dbReference type="Pfam" id="PF01535">
    <property type="entry name" value="PPR"/>
    <property type="match status" value="2"/>
</dbReference>
<dbReference type="Pfam" id="PF12854">
    <property type="entry name" value="PPR_1"/>
    <property type="match status" value="1"/>
</dbReference>
<dbReference type="Pfam" id="PF13041">
    <property type="entry name" value="PPR_2"/>
    <property type="match status" value="5"/>
</dbReference>
<dbReference type="SUPFAM" id="SSF81901">
    <property type="entry name" value="HCP-like"/>
    <property type="match status" value="1"/>
</dbReference>
<dbReference type="PROSITE" id="PS51375">
    <property type="entry name" value="PPR"/>
    <property type="match status" value="13"/>
</dbReference>
<organism>
    <name type="scientific">Arabidopsis thaliana</name>
    <name type="common">Mouse-ear cress</name>
    <dbReference type="NCBI Taxonomy" id="3702"/>
    <lineage>
        <taxon>Eukaryota</taxon>
        <taxon>Viridiplantae</taxon>
        <taxon>Streptophyta</taxon>
        <taxon>Embryophyta</taxon>
        <taxon>Tracheophyta</taxon>
        <taxon>Spermatophyta</taxon>
        <taxon>Magnoliopsida</taxon>
        <taxon>eudicotyledons</taxon>
        <taxon>Gunneridae</taxon>
        <taxon>Pentapetalae</taxon>
        <taxon>rosids</taxon>
        <taxon>malvids</taxon>
        <taxon>Brassicales</taxon>
        <taxon>Brassicaceae</taxon>
        <taxon>Camelineae</taxon>
        <taxon>Arabidopsis</taxon>
    </lineage>
</organism>
<evidence type="ECO:0000255" key="1"/>
<evidence type="ECO:0000305" key="2"/>
<protein>
    <recommendedName>
        <fullName>Pentatricopeptide repeat-containing protein At1g79080, chloroplastic</fullName>
    </recommendedName>
</protein>
<gene>
    <name type="ordered locus">At1g79080</name>
    <name type="ORF">YUP8H12R.30</name>
</gene>
<keyword id="KW-0150">Chloroplast</keyword>
<keyword id="KW-0934">Plastid</keyword>
<keyword id="KW-1185">Reference proteome</keyword>
<keyword id="KW-0677">Repeat</keyword>
<keyword id="KW-0809">Transit peptide</keyword>
<proteinExistence type="evidence at transcript level"/>
<accession>A3KPF8</accession>
<accession>O64543</accession>
<sequence>MSTLLNSVLSMASPESSPRKAVGFVSHIPSGFLHFSSVSKGVARVLASTQITLSPKDSAFTITGSSWKPDLDSGSFSDDPRSDEPNLSDSFSHLESLVTGGHKPNVAHSTQLLYDLCKANRLKKAIRVIELMVSSGIIPDASAYTYLVNQLCKRGNVGYAMQLVEKMEDHGYPSNTVTYNALVRGLCMLGSLNQSLQFVERLMQKGLAPNAFTYSFLLEAAYKERGTDEAVKLLDEIIVKGGEPNLVSYNVLLTGFCKEGRTDDAMALFRELPAKGFKANVVSYNILLRCLCCDGRWEEANSLLAEMDGGDRAPSVVTYNILINSLAFHGRTEQALQVLKEMSKGNHQFRVTATSYNPVIARLCKEGKVDLVVKCLDEMIYRRCKPNEGTYNAIGSLCEHNSKVQEAFYIIQSLSNKQKCCTHDFYKSVITSLCRKGNTFAAFQLLYEMTRCGFDPDAHTYSALIRGLCLEGMFTGAMEVLSIMEESENCKPTVDNFNAMILGLCKIRRTDLAMEVFEMMVEKKRMPNETTYAILVEGIAHEDELELAKEVLDELRLRKVIGQNAVDRIVMQFNLD</sequence>